<feature type="chain" id="PRO_0000059460" description="Glycerol kinase 1">
    <location>
        <begin position="1"/>
        <end position="505"/>
    </location>
</feature>
<feature type="binding site" evidence="1">
    <location>
        <position position="13"/>
    </location>
    <ligand>
        <name>ADP</name>
        <dbReference type="ChEBI" id="CHEBI:456216"/>
    </ligand>
</feature>
<feature type="binding site" evidence="1">
    <location>
        <position position="13"/>
    </location>
    <ligand>
        <name>ATP</name>
        <dbReference type="ChEBI" id="CHEBI:30616"/>
    </ligand>
</feature>
<feature type="binding site" evidence="1">
    <location>
        <position position="13"/>
    </location>
    <ligand>
        <name>sn-glycerol 3-phosphate</name>
        <dbReference type="ChEBI" id="CHEBI:57597"/>
    </ligand>
</feature>
<feature type="binding site" evidence="1">
    <location>
        <position position="14"/>
    </location>
    <ligand>
        <name>ATP</name>
        <dbReference type="ChEBI" id="CHEBI:30616"/>
    </ligand>
</feature>
<feature type="binding site" evidence="1">
    <location>
        <position position="15"/>
    </location>
    <ligand>
        <name>ATP</name>
        <dbReference type="ChEBI" id="CHEBI:30616"/>
    </ligand>
</feature>
<feature type="binding site" evidence="1">
    <location>
        <position position="17"/>
    </location>
    <ligand>
        <name>ADP</name>
        <dbReference type="ChEBI" id="CHEBI:456216"/>
    </ligand>
</feature>
<feature type="binding site" evidence="1">
    <location>
        <position position="83"/>
    </location>
    <ligand>
        <name>glycerol</name>
        <dbReference type="ChEBI" id="CHEBI:17754"/>
    </ligand>
</feature>
<feature type="binding site" evidence="1">
    <location>
        <position position="83"/>
    </location>
    <ligand>
        <name>sn-glycerol 3-phosphate</name>
        <dbReference type="ChEBI" id="CHEBI:57597"/>
    </ligand>
</feature>
<feature type="binding site" evidence="1">
    <location>
        <position position="84"/>
    </location>
    <ligand>
        <name>glycerol</name>
        <dbReference type="ChEBI" id="CHEBI:17754"/>
    </ligand>
</feature>
<feature type="binding site" evidence="1">
    <location>
        <position position="84"/>
    </location>
    <ligand>
        <name>sn-glycerol 3-phosphate</name>
        <dbReference type="ChEBI" id="CHEBI:57597"/>
    </ligand>
</feature>
<feature type="binding site" evidence="1">
    <location>
        <position position="135"/>
    </location>
    <ligand>
        <name>glycerol</name>
        <dbReference type="ChEBI" id="CHEBI:17754"/>
    </ligand>
</feature>
<feature type="binding site" evidence="1">
    <location>
        <position position="135"/>
    </location>
    <ligand>
        <name>sn-glycerol 3-phosphate</name>
        <dbReference type="ChEBI" id="CHEBI:57597"/>
    </ligand>
</feature>
<feature type="binding site" evidence="1">
    <location>
        <position position="245"/>
    </location>
    <ligand>
        <name>glycerol</name>
        <dbReference type="ChEBI" id="CHEBI:17754"/>
    </ligand>
</feature>
<feature type="binding site" evidence="1">
    <location>
        <position position="245"/>
    </location>
    <ligand>
        <name>sn-glycerol 3-phosphate</name>
        <dbReference type="ChEBI" id="CHEBI:57597"/>
    </ligand>
</feature>
<feature type="binding site" evidence="1">
    <location>
        <position position="246"/>
    </location>
    <ligand>
        <name>glycerol</name>
        <dbReference type="ChEBI" id="CHEBI:17754"/>
    </ligand>
</feature>
<feature type="binding site" evidence="1">
    <location>
        <position position="267"/>
    </location>
    <ligand>
        <name>ADP</name>
        <dbReference type="ChEBI" id="CHEBI:456216"/>
    </ligand>
</feature>
<feature type="binding site" evidence="1">
    <location>
        <position position="267"/>
    </location>
    <ligand>
        <name>ATP</name>
        <dbReference type="ChEBI" id="CHEBI:30616"/>
    </ligand>
</feature>
<feature type="binding site" evidence="1">
    <location>
        <position position="310"/>
    </location>
    <ligand>
        <name>ADP</name>
        <dbReference type="ChEBI" id="CHEBI:456216"/>
    </ligand>
</feature>
<feature type="binding site" evidence="1">
    <location>
        <position position="310"/>
    </location>
    <ligand>
        <name>ATP</name>
        <dbReference type="ChEBI" id="CHEBI:30616"/>
    </ligand>
</feature>
<feature type="binding site" evidence="1">
    <location>
        <position position="314"/>
    </location>
    <ligand>
        <name>ATP</name>
        <dbReference type="ChEBI" id="CHEBI:30616"/>
    </ligand>
</feature>
<feature type="binding site" evidence="1">
    <location>
        <position position="411"/>
    </location>
    <ligand>
        <name>ADP</name>
        <dbReference type="ChEBI" id="CHEBI:456216"/>
    </ligand>
</feature>
<feature type="binding site" evidence="1">
    <location>
        <position position="411"/>
    </location>
    <ligand>
        <name>ATP</name>
        <dbReference type="ChEBI" id="CHEBI:30616"/>
    </ligand>
</feature>
<feature type="binding site" evidence="1">
    <location>
        <position position="415"/>
    </location>
    <ligand>
        <name>ADP</name>
        <dbReference type="ChEBI" id="CHEBI:456216"/>
    </ligand>
</feature>
<feature type="modified residue" description="Phosphohistidine; by HPr" evidence="1">
    <location>
        <position position="231"/>
    </location>
</feature>
<organism>
    <name type="scientific">Lactiplantibacillus plantarum (strain ATCC BAA-793 / NCIMB 8826 / WCFS1)</name>
    <name type="common">Lactobacillus plantarum</name>
    <dbReference type="NCBI Taxonomy" id="220668"/>
    <lineage>
        <taxon>Bacteria</taxon>
        <taxon>Bacillati</taxon>
        <taxon>Bacillota</taxon>
        <taxon>Bacilli</taxon>
        <taxon>Lactobacillales</taxon>
        <taxon>Lactobacillaceae</taxon>
        <taxon>Lactiplantibacillus</taxon>
    </lineage>
</organism>
<dbReference type="EC" id="2.7.1.30" evidence="1"/>
<dbReference type="EMBL" id="AL935263">
    <property type="protein sequence ID" value="CCC77887.1"/>
    <property type="molecule type" value="Genomic_DNA"/>
</dbReference>
<dbReference type="RefSeq" id="YP_004888401.1">
    <property type="nucleotide sequence ID" value="NC_004567.2"/>
</dbReference>
<dbReference type="SMR" id="Q88ZF1"/>
<dbReference type="STRING" id="220668.lp_0370"/>
<dbReference type="EnsemblBacteria" id="CCC77887">
    <property type="protein sequence ID" value="CCC77887"/>
    <property type="gene ID" value="lp_0370"/>
</dbReference>
<dbReference type="KEGG" id="lpl:lp_0370"/>
<dbReference type="PATRIC" id="fig|220668.9.peg.314"/>
<dbReference type="eggNOG" id="COG0554">
    <property type="taxonomic scope" value="Bacteria"/>
</dbReference>
<dbReference type="HOGENOM" id="CLU_009281_2_3_9"/>
<dbReference type="OrthoDB" id="9805576at2"/>
<dbReference type="PhylomeDB" id="Q88ZF1"/>
<dbReference type="UniPathway" id="UPA00618">
    <property type="reaction ID" value="UER00672"/>
</dbReference>
<dbReference type="Proteomes" id="UP000000432">
    <property type="component" value="Chromosome"/>
</dbReference>
<dbReference type="GO" id="GO:0005829">
    <property type="term" value="C:cytosol"/>
    <property type="evidence" value="ECO:0007669"/>
    <property type="project" value="TreeGrafter"/>
</dbReference>
<dbReference type="GO" id="GO:0005524">
    <property type="term" value="F:ATP binding"/>
    <property type="evidence" value="ECO:0007669"/>
    <property type="project" value="UniProtKB-UniRule"/>
</dbReference>
<dbReference type="GO" id="GO:0004370">
    <property type="term" value="F:glycerol kinase activity"/>
    <property type="evidence" value="ECO:0000250"/>
    <property type="project" value="UniProtKB"/>
</dbReference>
<dbReference type="GO" id="GO:0019563">
    <property type="term" value="P:glycerol catabolic process"/>
    <property type="evidence" value="ECO:0007669"/>
    <property type="project" value="UniProtKB-UniRule"/>
</dbReference>
<dbReference type="GO" id="GO:0006071">
    <property type="term" value="P:glycerol metabolic process"/>
    <property type="evidence" value="ECO:0000250"/>
    <property type="project" value="UniProtKB"/>
</dbReference>
<dbReference type="GO" id="GO:0006072">
    <property type="term" value="P:glycerol-3-phosphate metabolic process"/>
    <property type="evidence" value="ECO:0007669"/>
    <property type="project" value="InterPro"/>
</dbReference>
<dbReference type="CDD" id="cd07786">
    <property type="entry name" value="FGGY_EcGK_like"/>
    <property type="match status" value="1"/>
</dbReference>
<dbReference type="FunFam" id="3.30.420.40:FF:000007">
    <property type="entry name" value="Glycerol kinase"/>
    <property type="match status" value="1"/>
</dbReference>
<dbReference type="FunFam" id="3.30.420.40:FF:000008">
    <property type="entry name" value="Glycerol kinase"/>
    <property type="match status" value="1"/>
</dbReference>
<dbReference type="Gene3D" id="3.30.420.40">
    <property type="match status" value="2"/>
</dbReference>
<dbReference type="HAMAP" id="MF_00186">
    <property type="entry name" value="Glycerol_kin"/>
    <property type="match status" value="1"/>
</dbReference>
<dbReference type="InterPro" id="IPR043129">
    <property type="entry name" value="ATPase_NBD"/>
</dbReference>
<dbReference type="InterPro" id="IPR000577">
    <property type="entry name" value="Carb_kinase_FGGY"/>
</dbReference>
<dbReference type="InterPro" id="IPR018483">
    <property type="entry name" value="Carb_kinase_FGGY_CS"/>
</dbReference>
<dbReference type="InterPro" id="IPR018485">
    <property type="entry name" value="FGGY_C"/>
</dbReference>
<dbReference type="InterPro" id="IPR018484">
    <property type="entry name" value="FGGY_N"/>
</dbReference>
<dbReference type="InterPro" id="IPR005999">
    <property type="entry name" value="Glycerol_kin"/>
</dbReference>
<dbReference type="NCBIfam" id="TIGR01311">
    <property type="entry name" value="glycerol_kin"/>
    <property type="match status" value="1"/>
</dbReference>
<dbReference type="NCBIfam" id="NF000756">
    <property type="entry name" value="PRK00047.1"/>
    <property type="match status" value="1"/>
</dbReference>
<dbReference type="PANTHER" id="PTHR10196:SF69">
    <property type="entry name" value="GLYCEROL KINASE"/>
    <property type="match status" value="1"/>
</dbReference>
<dbReference type="PANTHER" id="PTHR10196">
    <property type="entry name" value="SUGAR KINASE"/>
    <property type="match status" value="1"/>
</dbReference>
<dbReference type="Pfam" id="PF02782">
    <property type="entry name" value="FGGY_C"/>
    <property type="match status" value="1"/>
</dbReference>
<dbReference type="Pfam" id="PF00370">
    <property type="entry name" value="FGGY_N"/>
    <property type="match status" value="1"/>
</dbReference>
<dbReference type="PIRSF" id="PIRSF000538">
    <property type="entry name" value="GlpK"/>
    <property type="match status" value="1"/>
</dbReference>
<dbReference type="SUPFAM" id="SSF53067">
    <property type="entry name" value="Actin-like ATPase domain"/>
    <property type="match status" value="2"/>
</dbReference>
<dbReference type="PROSITE" id="PS00933">
    <property type="entry name" value="FGGY_KINASES_1"/>
    <property type="match status" value="1"/>
</dbReference>
<dbReference type="PROSITE" id="PS00445">
    <property type="entry name" value="FGGY_KINASES_2"/>
    <property type="match status" value="1"/>
</dbReference>
<sequence>MTDKYIMAIDEGTTSTRAIIFDHAGHKVADSQREFPQYFPQPGWVEHNANEIWNAVLSTIANAFIESGIKPAQISGIGITNQRETTIVWDKQTGLPIYNAIVWQSRQTAPIAEKLVKDGYGDLIHQHTGLVTDAYFSATKIRWILDHVKGAQERAEKGELLFGTIDTWLLWKLTGGATHVTDYSNASRTMLFNIHDLKWDDQILQLLNIPAAMLPEVRTNSEVYGKTKDYHFFGSEVPISGMAGDQQAALFGQLAFEPGTVKNTYGTGAFIVMNTGEKPQLSDNNLLTTIGYGINGKVYYALEGSIFVAGSAIQWLRDGIRLVESAPDSERAARESHNENEVYVVPAFTGLGAPYWDSEARGSVFGLTRGTTREDFIKATLQALAYQTRDVVETMKKDSGIEIPVLKVDGGAARNDWLMQFQADILDTQIMRAANLETTALGAAFLAGLSVGYWQDLEELKASYKPGTSFDPEMGPAERTNLYEGWQAAVKATQVFKHTPYHAGK</sequence>
<name>GLPK1_LACPL</name>
<keyword id="KW-0067">ATP-binding</keyword>
<keyword id="KW-0319">Glycerol metabolism</keyword>
<keyword id="KW-0418">Kinase</keyword>
<keyword id="KW-0547">Nucleotide-binding</keyword>
<keyword id="KW-0597">Phosphoprotein</keyword>
<keyword id="KW-1185">Reference proteome</keyword>
<keyword id="KW-0808">Transferase</keyword>
<evidence type="ECO:0000255" key="1">
    <source>
        <dbReference type="HAMAP-Rule" id="MF_00186"/>
    </source>
</evidence>
<accession>Q88ZF1</accession>
<accession>F9UTW7</accession>
<reference key="1">
    <citation type="journal article" date="2003" name="Proc. Natl. Acad. Sci. U.S.A.">
        <title>Complete genome sequence of Lactobacillus plantarum WCFS1.</title>
        <authorList>
            <person name="Kleerebezem M."/>
            <person name="Boekhorst J."/>
            <person name="van Kranenburg R."/>
            <person name="Molenaar D."/>
            <person name="Kuipers O.P."/>
            <person name="Leer R."/>
            <person name="Tarchini R."/>
            <person name="Peters S.A."/>
            <person name="Sandbrink H.M."/>
            <person name="Fiers M.W.E.J."/>
            <person name="Stiekema W."/>
            <person name="Klein Lankhorst R.M."/>
            <person name="Bron P.A."/>
            <person name="Hoffer S.M."/>
            <person name="Nierop Groot M.N."/>
            <person name="Kerkhoven R."/>
            <person name="De Vries M."/>
            <person name="Ursing B."/>
            <person name="De Vos W.M."/>
            <person name="Siezen R.J."/>
        </authorList>
    </citation>
    <scope>NUCLEOTIDE SEQUENCE [LARGE SCALE GENOMIC DNA]</scope>
    <source>
        <strain>ATCC BAA-793 / NCIMB 8826 / WCFS1</strain>
    </source>
</reference>
<reference key="2">
    <citation type="journal article" date="2012" name="J. Bacteriol.">
        <title>Complete resequencing and reannotation of the Lactobacillus plantarum WCFS1 genome.</title>
        <authorList>
            <person name="Siezen R.J."/>
            <person name="Francke C."/>
            <person name="Renckens B."/>
            <person name="Boekhorst J."/>
            <person name="Wels M."/>
            <person name="Kleerebezem M."/>
            <person name="van Hijum S.A."/>
        </authorList>
    </citation>
    <scope>NUCLEOTIDE SEQUENCE [LARGE SCALE GENOMIC DNA]</scope>
    <scope>GENOME REANNOTATION</scope>
    <source>
        <strain>ATCC BAA-793 / NCIMB 8826 / WCFS1</strain>
    </source>
</reference>
<protein>
    <recommendedName>
        <fullName evidence="1">Glycerol kinase 1</fullName>
        <ecNumber evidence="1">2.7.1.30</ecNumber>
    </recommendedName>
    <alternativeName>
        <fullName evidence="1">ATP:glycerol 3-phosphotransferase 1</fullName>
    </alternativeName>
    <alternativeName>
        <fullName evidence="1">Glycerokinase 1</fullName>
        <shortName evidence="1">GK 1</shortName>
    </alternativeName>
</protein>
<gene>
    <name evidence="1" type="primary">glpK1</name>
    <name type="ordered locus">lp_0370</name>
</gene>
<proteinExistence type="inferred from homology"/>
<comment type="function">
    <text evidence="1">Key enzyme in the regulation of glycerol uptake and metabolism. Catalyzes the phosphorylation of glycerol to yield sn-glycerol 3-phosphate.</text>
</comment>
<comment type="catalytic activity">
    <reaction evidence="1">
        <text>glycerol + ATP = sn-glycerol 3-phosphate + ADP + H(+)</text>
        <dbReference type="Rhea" id="RHEA:21644"/>
        <dbReference type="ChEBI" id="CHEBI:15378"/>
        <dbReference type="ChEBI" id="CHEBI:17754"/>
        <dbReference type="ChEBI" id="CHEBI:30616"/>
        <dbReference type="ChEBI" id="CHEBI:57597"/>
        <dbReference type="ChEBI" id="CHEBI:456216"/>
        <dbReference type="EC" id="2.7.1.30"/>
    </reaction>
</comment>
<comment type="activity regulation">
    <text evidence="1">Activated by phosphorylation and inhibited by fructose 1,6-bisphosphate (FBP).</text>
</comment>
<comment type="pathway">
    <text evidence="1">Polyol metabolism; glycerol degradation via glycerol kinase pathway; sn-glycerol 3-phosphate from glycerol: step 1/1.</text>
</comment>
<comment type="subunit">
    <text evidence="1">Homotetramer and homodimer (in equilibrium).</text>
</comment>
<comment type="PTM">
    <text evidence="1">The phosphoenolpyruvate-dependent sugar phosphotransferase system (PTS), including enzyme I, and histidine-containing protein (HPr) are required for the phosphorylation, which leads to the activation of the enzyme.</text>
</comment>
<comment type="similarity">
    <text evidence="1">Belongs to the FGGY kinase family.</text>
</comment>